<reference key="1">
    <citation type="journal article" date="1986" name="Proc. Natl. Acad. Sci. U.S.A.">
        <title>Cloning and sequencing of the pertussis toxin genes: operon structure and gene duplication.</title>
        <authorList>
            <person name="Nicosia A."/>
            <person name="Perugini M."/>
            <person name="Franzini C."/>
            <person name="Casagli M.C."/>
            <person name="Borri M.G."/>
            <person name="Antoni G."/>
            <person name="Almoni M."/>
            <person name="Neri P."/>
            <person name="Ratti G."/>
            <person name="Rappuoli R."/>
        </authorList>
    </citation>
    <scope>NUCLEOTIDE SEQUENCE [GENOMIC DNA]</scope>
    <source>
        <strain>BP165</strain>
    </source>
</reference>
<reference key="2">
    <citation type="journal article" date="1986" name="Science">
        <title>Pertussis toxin gene: nucleotide sequence and genetic organization.</title>
        <authorList>
            <person name="Locht C."/>
            <person name="Keith J.M."/>
        </authorList>
    </citation>
    <scope>NUCLEOTIDE SEQUENCE [GENOMIC DNA]</scope>
</reference>
<reference key="3">
    <citation type="journal article" date="2003" name="Nat. Genet.">
        <title>Comparative analysis of the genome sequences of Bordetella pertussis, Bordetella parapertussis and Bordetella bronchiseptica.</title>
        <authorList>
            <person name="Parkhill J."/>
            <person name="Sebaihia M."/>
            <person name="Preston A."/>
            <person name="Murphy L.D."/>
            <person name="Thomson N.R."/>
            <person name="Harris D.E."/>
            <person name="Holden M.T.G."/>
            <person name="Churcher C.M."/>
            <person name="Bentley S.D."/>
            <person name="Mungall K.L."/>
            <person name="Cerdeno-Tarraga A.-M."/>
            <person name="Temple L."/>
            <person name="James K.D."/>
            <person name="Harris B."/>
            <person name="Quail M.A."/>
            <person name="Achtman M."/>
            <person name="Atkin R."/>
            <person name="Baker S."/>
            <person name="Basham D."/>
            <person name="Bason N."/>
            <person name="Cherevach I."/>
            <person name="Chillingworth T."/>
            <person name="Collins M."/>
            <person name="Cronin A."/>
            <person name="Davis P."/>
            <person name="Doggett J."/>
            <person name="Feltwell T."/>
            <person name="Goble A."/>
            <person name="Hamlin N."/>
            <person name="Hauser H."/>
            <person name="Holroyd S."/>
            <person name="Jagels K."/>
            <person name="Leather S."/>
            <person name="Moule S."/>
            <person name="Norberczak H."/>
            <person name="O'Neil S."/>
            <person name="Ormond D."/>
            <person name="Price C."/>
            <person name="Rabbinowitsch E."/>
            <person name="Rutter S."/>
            <person name="Sanders M."/>
            <person name="Saunders D."/>
            <person name="Seeger K."/>
            <person name="Sharp S."/>
            <person name="Simmonds M."/>
            <person name="Skelton J."/>
            <person name="Squares R."/>
            <person name="Squares S."/>
            <person name="Stevens K."/>
            <person name="Unwin L."/>
            <person name="Whitehead S."/>
            <person name="Barrell B.G."/>
            <person name="Maskell D.J."/>
        </authorList>
    </citation>
    <scope>NUCLEOTIDE SEQUENCE [LARGE SCALE GENOMIC DNA]</scope>
    <source>
        <strain>Tohama I / ATCC BAA-589 / NCTC 13251</strain>
    </source>
</reference>
<reference key="4">
    <citation type="journal article" date="1994" name="Structure">
        <title>The crystal structure of pertussis toxin.</title>
        <authorList>
            <person name="Stein P.E."/>
            <person name="Boodhoo A."/>
            <person name="Armstrong G.D."/>
            <person name="Cockle S.A."/>
            <person name="Klein M.H."/>
            <person name="Read R.J."/>
        </authorList>
    </citation>
    <scope>X-RAY CRYSTALLOGRAPHY (2.9 ANGSTROMS)</scope>
    <source>
        <strain>10536</strain>
    </source>
</reference>
<reference key="5">
    <citation type="journal article" date="1996" name="J. Mol. Biol.">
        <title>Crystal structure of the pertussis toxin-ATP complex: a molecular sensor.</title>
        <authorList>
            <person name="Hazes B."/>
            <person name="Boodhoo A."/>
            <person name="Cockle S.A."/>
            <person name="Read R.J."/>
        </authorList>
    </citation>
    <scope>X-RAY CRYSTALLOGRAPHY (2.7 ANGSTROMS)</scope>
</reference>
<protein>
    <recommendedName>
        <fullName>Pertussis toxin subunit 4</fullName>
        <shortName>PTX S4</shortName>
    </recommendedName>
    <alternativeName>
        <fullName>Islet-activating protein S4</fullName>
        <shortName>IAP S4</shortName>
    </alternativeName>
</protein>
<evidence type="ECO:0000305" key="1"/>
<evidence type="ECO:0007829" key="2">
    <source>
        <dbReference type="PDB" id="1BCP"/>
    </source>
</evidence>
<evidence type="ECO:0007829" key="3">
    <source>
        <dbReference type="PDB" id="6RO0"/>
    </source>
</evidence>
<feature type="signal peptide">
    <location>
        <begin position="1"/>
        <end position="42"/>
    </location>
</feature>
<feature type="chain" id="PRO_0000019362" description="Pertussis toxin subunit 4">
    <location>
        <begin position="43"/>
        <end position="152"/>
    </location>
</feature>
<feature type="disulfide bond">
    <location>
        <begin position="73"/>
        <end position="93"/>
    </location>
</feature>
<feature type="disulfide bond">
    <location>
        <begin position="145"/>
        <end position="151"/>
    </location>
</feature>
<feature type="strand" evidence="3">
    <location>
        <begin position="48"/>
        <end position="62"/>
    </location>
</feature>
<feature type="strand" evidence="3">
    <location>
        <begin position="69"/>
        <end position="78"/>
    </location>
</feature>
<feature type="strand" evidence="2">
    <location>
        <begin position="83"/>
        <end position="85"/>
    </location>
</feature>
<feature type="helix" evidence="3">
    <location>
        <begin position="86"/>
        <end position="88"/>
    </location>
</feature>
<feature type="strand" evidence="3">
    <location>
        <begin position="89"/>
        <end position="100"/>
    </location>
</feature>
<feature type="helix" evidence="3">
    <location>
        <begin position="105"/>
        <end position="116"/>
    </location>
</feature>
<feature type="strand" evidence="3">
    <location>
        <begin position="120"/>
        <end position="131"/>
    </location>
</feature>
<feature type="strand" evidence="3">
    <location>
        <begin position="134"/>
        <end position="144"/>
    </location>
</feature>
<feature type="turn" evidence="3">
    <location>
        <begin position="148"/>
        <end position="150"/>
    </location>
</feature>
<accession>P0A3R5</accession>
<accession>P04980</accession>
<dbReference type="EMBL" id="M14378">
    <property type="protein sequence ID" value="AAA83982.1"/>
    <property type="molecule type" value="Genomic_DNA"/>
</dbReference>
<dbReference type="EMBL" id="M13223">
    <property type="protein sequence ID" value="AAA22983.1"/>
    <property type="status" value="ALT_INIT"/>
    <property type="molecule type" value="Genomic_DNA"/>
</dbReference>
<dbReference type="EMBL" id="BX640422">
    <property type="protein sequence ID" value="CAE44040.1"/>
    <property type="molecule type" value="Genomic_DNA"/>
</dbReference>
<dbReference type="PIR" id="D24394">
    <property type="entry name" value="WEBR41"/>
</dbReference>
<dbReference type="RefSeq" id="NP_882284.1">
    <property type="nucleotide sequence ID" value="NC_002929.2"/>
</dbReference>
<dbReference type="RefSeq" id="WP_010929491.1">
    <property type="nucleotide sequence ID" value="NZ_CP039022.1"/>
</dbReference>
<dbReference type="PDB" id="1BCP">
    <property type="method" value="X-ray"/>
    <property type="resolution" value="2.70 A"/>
    <property type="chains" value="D/E/J/K=43-152"/>
</dbReference>
<dbReference type="PDB" id="1PRT">
    <property type="method" value="X-ray"/>
    <property type="resolution" value="2.90 A"/>
    <property type="chains" value="D/E/J/K=43-152"/>
</dbReference>
<dbReference type="PDB" id="1PTO">
    <property type="method" value="X-ray"/>
    <property type="resolution" value="3.50 A"/>
    <property type="chains" value="D/E/J/K=43-152"/>
</dbReference>
<dbReference type="PDB" id="6RO0">
    <property type="method" value="X-ray"/>
    <property type="resolution" value="2.13 A"/>
    <property type="chains" value="D/E/J/K=1-152"/>
</dbReference>
<dbReference type="PDBsum" id="1BCP"/>
<dbReference type="PDBsum" id="1PRT"/>
<dbReference type="PDBsum" id="1PTO"/>
<dbReference type="PDBsum" id="6RO0"/>
<dbReference type="SMR" id="P0A3R5"/>
<dbReference type="STRING" id="257313.BP3785"/>
<dbReference type="TCDB" id="1.C.72.1.1">
    <property type="family name" value="the pertussis toxin (ptx) family"/>
</dbReference>
<dbReference type="UniLectin" id="P0A3R5"/>
<dbReference type="PaxDb" id="257313-BP3785"/>
<dbReference type="ABCD" id="P0A3R5">
    <property type="antibodies" value="46 sequenced antibodies"/>
</dbReference>
<dbReference type="GeneID" id="93206104"/>
<dbReference type="KEGG" id="bpe:BP3785"/>
<dbReference type="PATRIC" id="fig|257313.5.peg.4089"/>
<dbReference type="HOGENOM" id="CLU_1718794_0_0_4"/>
<dbReference type="EvolutionaryTrace" id="P0A3R5"/>
<dbReference type="Proteomes" id="UP000002676">
    <property type="component" value="Chromosome"/>
</dbReference>
<dbReference type="GO" id="GO:0005576">
    <property type="term" value="C:extracellular region"/>
    <property type="evidence" value="ECO:0007669"/>
    <property type="project" value="UniProtKB-SubCell"/>
</dbReference>
<dbReference type="GO" id="GO:0020002">
    <property type="term" value="C:host cell plasma membrane"/>
    <property type="evidence" value="ECO:0007669"/>
    <property type="project" value="UniProtKB-SubCell"/>
</dbReference>
<dbReference type="GO" id="GO:0016020">
    <property type="term" value="C:membrane"/>
    <property type="evidence" value="ECO:0007669"/>
    <property type="project" value="UniProtKB-KW"/>
</dbReference>
<dbReference type="GO" id="GO:0090729">
    <property type="term" value="F:toxin activity"/>
    <property type="evidence" value="ECO:0007669"/>
    <property type="project" value="UniProtKB-KW"/>
</dbReference>
<dbReference type="Gene3D" id="2.40.50.110">
    <property type="match status" value="1"/>
</dbReference>
<dbReference type="InterPro" id="IPR008992">
    <property type="entry name" value="Enterotoxin"/>
</dbReference>
<dbReference type="InterPro" id="IPR015355">
    <property type="entry name" value="Pertussis_toxin_subS4"/>
</dbReference>
<dbReference type="Pfam" id="PF09275">
    <property type="entry name" value="Pertus-S4-tox"/>
    <property type="match status" value="1"/>
</dbReference>
<dbReference type="SUPFAM" id="SSF50203">
    <property type="entry name" value="Bacterial enterotoxins"/>
    <property type="match status" value="1"/>
</dbReference>
<organism>
    <name type="scientific">Bordetella pertussis (strain Tohama I / ATCC BAA-589 / NCTC 13251)</name>
    <dbReference type="NCBI Taxonomy" id="257313"/>
    <lineage>
        <taxon>Bacteria</taxon>
        <taxon>Pseudomonadati</taxon>
        <taxon>Pseudomonadota</taxon>
        <taxon>Betaproteobacteria</taxon>
        <taxon>Burkholderiales</taxon>
        <taxon>Alcaligenaceae</taxon>
        <taxon>Bordetella</taxon>
    </lineage>
</organism>
<gene>
    <name type="primary">ptxD</name>
    <name type="ordered locus">BP3785</name>
</gene>
<name>TOX4_BORPE</name>
<comment type="function">
    <text>PTX oligomer B binds to receptors on the eukaryotic cell surface and facilitates the translocation of the toxic subunit across the cell membrane.</text>
</comment>
<comment type="subunit">
    <text>Pertussis toxin contains five different chains, S1-S5. They are organized into 2 functional subunits: A, composed of S1 (which is toxic) and B, containing S2, S3, S5, and two copies of S4 (B binds to the membrane receptors). Dimers of S2-S4 and S3-S4 are held together by S5.</text>
</comment>
<comment type="subcellular location">
    <subcellularLocation>
        <location>Secreted</location>
    </subcellularLocation>
    <subcellularLocation>
        <location evidence="1">Host cell membrane</location>
    </subcellularLocation>
</comment>
<comment type="sequence caution" evidence="1">
    <conflict type="erroneous initiation">
        <sequence resource="EMBL-CDS" id="AAA22983"/>
    </conflict>
</comment>
<keyword id="KW-0002">3D-structure</keyword>
<keyword id="KW-1015">Disulfide bond</keyword>
<keyword id="KW-1032">Host cell membrane</keyword>
<keyword id="KW-1043">Host membrane</keyword>
<keyword id="KW-0472">Membrane</keyword>
<keyword id="KW-1185">Reference proteome</keyword>
<keyword id="KW-0964">Secreted</keyword>
<keyword id="KW-0732">Signal</keyword>
<keyword id="KW-0800">Toxin</keyword>
<keyword id="KW-0843">Virulence</keyword>
<keyword id="KW-0855">Whooping cough</keyword>
<proteinExistence type="evidence at protein level"/>
<sequence length="152" mass="16544">MLRRFPTRTTAPGQGGARRSRVRALAWLLASGAMTHLSPALADVPYVLVKTNMVVTSVAMKPYEVTPTRMLVCGIAAKLGAAASSPDAHVPFCFGKDLKRPGSSPMEVMLRAVFMQQRPLRMFLGPKQLTFEGKPALELIRMVECSGKQDCP</sequence>